<proteinExistence type="inferred from homology"/>
<protein>
    <recommendedName>
        <fullName evidence="1">Octanoyltransferase</fullName>
        <ecNumber evidence="1">2.3.1.181</ecNumber>
    </recommendedName>
    <alternativeName>
        <fullName evidence="1">Lipoate-protein ligase B</fullName>
    </alternativeName>
    <alternativeName>
        <fullName evidence="1">Lipoyl/octanoyl transferase</fullName>
    </alternativeName>
    <alternativeName>
        <fullName evidence="1">Octanoyl-[acyl-carrier-protein]-protein N-octanoyltransferase</fullName>
    </alternativeName>
</protein>
<sequence>MSAVEWSILPGLSPYRETLEAMENRVAAIRAGEAAEAIWLLEHPPLYTAGTSARPEDLVEPERFPVHVAGRGGQYTYHGPGQRVAYVMLDLDRRGRDVRRFVTALEDWVIATLAEFNVRGERREGRVGVWVVRPDRPAGLDGSPREDKIAAIGVKLRRWVSFHGLSINVEPNLTHFEGIVPCGIREHGVTSLVDLGLPVTMQDLDAALLRTFPQHFPD</sequence>
<accession>Q3J5A6</accession>
<gene>
    <name evidence="1" type="primary">lipB</name>
    <name type="ordered locus">RHOS4_04600</name>
    <name type="ORF">RSP_1878</name>
</gene>
<dbReference type="EC" id="2.3.1.181" evidence="1"/>
<dbReference type="EMBL" id="CP000143">
    <property type="protein sequence ID" value="ABA78028.1"/>
    <property type="molecule type" value="Genomic_DNA"/>
</dbReference>
<dbReference type="RefSeq" id="WP_011337049.1">
    <property type="nucleotide sequence ID" value="NC_007493.2"/>
</dbReference>
<dbReference type="RefSeq" id="YP_351929.1">
    <property type="nucleotide sequence ID" value="NC_007493.2"/>
</dbReference>
<dbReference type="SMR" id="Q3J5A6"/>
<dbReference type="STRING" id="272943.RSP_1878"/>
<dbReference type="EnsemblBacteria" id="ABA78028">
    <property type="protein sequence ID" value="ABA78028"/>
    <property type="gene ID" value="RSP_1878"/>
</dbReference>
<dbReference type="GeneID" id="3719146"/>
<dbReference type="KEGG" id="rsp:RSP_1878"/>
<dbReference type="PATRIC" id="fig|272943.9.peg.769"/>
<dbReference type="eggNOG" id="COG0321">
    <property type="taxonomic scope" value="Bacteria"/>
</dbReference>
<dbReference type="OrthoDB" id="9787061at2"/>
<dbReference type="PhylomeDB" id="Q3J5A6"/>
<dbReference type="UniPathway" id="UPA00538">
    <property type="reaction ID" value="UER00592"/>
</dbReference>
<dbReference type="Proteomes" id="UP000002703">
    <property type="component" value="Chromosome 1"/>
</dbReference>
<dbReference type="GO" id="GO:0005737">
    <property type="term" value="C:cytoplasm"/>
    <property type="evidence" value="ECO:0007669"/>
    <property type="project" value="UniProtKB-SubCell"/>
</dbReference>
<dbReference type="GO" id="GO:0033819">
    <property type="term" value="F:lipoyl(octanoyl) transferase activity"/>
    <property type="evidence" value="ECO:0007669"/>
    <property type="project" value="UniProtKB-EC"/>
</dbReference>
<dbReference type="GO" id="GO:0036211">
    <property type="term" value="P:protein modification process"/>
    <property type="evidence" value="ECO:0007669"/>
    <property type="project" value="InterPro"/>
</dbReference>
<dbReference type="CDD" id="cd16444">
    <property type="entry name" value="LipB"/>
    <property type="match status" value="1"/>
</dbReference>
<dbReference type="Gene3D" id="3.30.930.10">
    <property type="entry name" value="Bira Bifunctional Protein, Domain 2"/>
    <property type="match status" value="1"/>
</dbReference>
<dbReference type="HAMAP" id="MF_00013">
    <property type="entry name" value="LipB"/>
    <property type="match status" value="1"/>
</dbReference>
<dbReference type="InterPro" id="IPR045864">
    <property type="entry name" value="aa-tRNA-synth_II/BPL/LPL"/>
</dbReference>
<dbReference type="InterPro" id="IPR004143">
    <property type="entry name" value="BPL_LPL_catalytic"/>
</dbReference>
<dbReference type="InterPro" id="IPR000544">
    <property type="entry name" value="Octanoyltransferase"/>
</dbReference>
<dbReference type="InterPro" id="IPR020605">
    <property type="entry name" value="Octanoyltransferase_CS"/>
</dbReference>
<dbReference type="NCBIfam" id="TIGR00214">
    <property type="entry name" value="lipB"/>
    <property type="match status" value="1"/>
</dbReference>
<dbReference type="NCBIfam" id="NF010921">
    <property type="entry name" value="PRK14341.1"/>
    <property type="match status" value="1"/>
</dbReference>
<dbReference type="NCBIfam" id="NF010925">
    <property type="entry name" value="PRK14345.1"/>
    <property type="match status" value="1"/>
</dbReference>
<dbReference type="PANTHER" id="PTHR10993:SF7">
    <property type="entry name" value="LIPOYLTRANSFERASE 2, MITOCHONDRIAL-RELATED"/>
    <property type="match status" value="1"/>
</dbReference>
<dbReference type="PANTHER" id="PTHR10993">
    <property type="entry name" value="OCTANOYLTRANSFERASE"/>
    <property type="match status" value="1"/>
</dbReference>
<dbReference type="Pfam" id="PF21948">
    <property type="entry name" value="LplA-B_cat"/>
    <property type="match status" value="1"/>
</dbReference>
<dbReference type="PIRSF" id="PIRSF016262">
    <property type="entry name" value="LPLase"/>
    <property type="match status" value="1"/>
</dbReference>
<dbReference type="SUPFAM" id="SSF55681">
    <property type="entry name" value="Class II aaRS and biotin synthetases"/>
    <property type="match status" value="1"/>
</dbReference>
<dbReference type="PROSITE" id="PS51733">
    <property type="entry name" value="BPL_LPL_CATALYTIC"/>
    <property type="match status" value="1"/>
</dbReference>
<dbReference type="PROSITE" id="PS01313">
    <property type="entry name" value="LIPB"/>
    <property type="match status" value="1"/>
</dbReference>
<evidence type="ECO:0000255" key="1">
    <source>
        <dbReference type="HAMAP-Rule" id="MF_00013"/>
    </source>
</evidence>
<evidence type="ECO:0000255" key="2">
    <source>
        <dbReference type="PROSITE-ProRule" id="PRU01067"/>
    </source>
</evidence>
<name>LIPB_CERS4</name>
<feature type="chain" id="PRO_0000242754" description="Octanoyltransferase">
    <location>
        <begin position="1"/>
        <end position="218"/>
    </location>
</feature>
<feature type="domain" description="BPL/LPL catalytic" evidence="2">
    <location>
        <begin position="32"/>
        <end position="218"/>
    </location>
</feature>
<feature type="active site" description="Acyl-thioester intermediate" evidence="1">
    <location>
        <position position="182"/>
    </location>
</feature>
<feature type="binding site" evidence="1">
    <location>
        <begin position="71"/>
        <end position="78"/>
    </location>
    <ligand>
        <name>substrate</name>
    </ligand>
</feature>
<feature type="binding site" evidence="1">
    <location>
        <begin position="151"/>
        <end position="153"/>
    </location>
    <ligand>
        <name>substrate</name>
    </ligand>
</feature>
<feature type="binding site" evidence="1">
    <location>
        <begin position="164"/>
        <end position="166"/>
    </location>
    <ligand>
        <name>substrate</name>
    </ligand>
</feature>
<feature type="site" description="Lowers pKa of active site Cys" evidence="1">
    <location>
        <position position="148"/>
    </location>
</feature>
<organism>
    <name type="scientific">Cereibacter sphaeroides (strain ATCC 17023 / DSM 158 / JCM 6121 / CCUG 31486 / LMG 2827 / NBRC 12203 / NCIMB 8253 / ATH 2.4.1.)</name>
    <name type="common">Rhodobacter sphaeroides</name>
    <dbReference type="NCBI Taxonomy" id="272943"/>
    <lineage>
        <taxon>Bacteria</taxon>
        <taxon>Pseudomonadati</taxon>
        <taxon>Pseudomonadota</taxon>
        <taxon>Alphaproteobacteria</taxon>
        <taxon>Rhodobacterales</taxon>
        <taxon>Paracoccaceae</taxon>
        <taxon>Cereibacter</taxon>
    </lineage>
</organism>
<comment type="function">
    <text evidence="1">Catalyzes the transfer of endogenously produced octanoic acid from octanoyl-acyl-carrier-protein onto the lipoyl domains of lipoate-dependent enzymes. Lipoyl-ACP can also act as a substrate although octanoyl-ACP is likely to be the physiological substrate.</text>
</comment>
<comment type="catalytic activity">
    <reaction evidence="1">
        <text>octanoyl-[ACP] + L-lysyl-[protein] = N(6)-octanoyl-L-lysyl-[protein] + holo-[ACP] + H(+)</text>
        <dbReference type="Rhea" id="RHEA:17665"/>
        <dbReference type="Rhea" id="RHEA-COMP:9636"/>
        <dbReference type="Rhea" id="RHEA-COMP:9685"/>
        <dbReference type="Rhea" id="RHEA-COMP:9752"/>
        <dbReference type="Rhea" id="RHEA-COMP:9928"/>
        <dbReference type="ChEBI" id="CHEBI:15378"/>
        <dbReference type="ChEBI" id="CHEBI:29969"/>
        <dbReference type="ChEBI" id="CHEBI:64479"/>
        <dbReference type="ChEBI" id="CHEBI:78463"/>
        <dbReference type="ChEBI" id="CHEBI:78809"/>
        <dbReference type="EC" id="2.3.1.181"/>
    </reaction>
</comment>
<comment type="pathway">
    <text evidence="1">Protein modification; protein lipoylation via endogenous pathway; protein N(6)-(lipoyl)lysine from octanoyl-[acyl-carrier-protein]: step 1/2.</text>
</comment>
<comment type="subcellular location">
    <subcellularLocation>
        <location evidence="1">Cytoplasm</location>
    </subcellularLocation>
</comment>
<comment type="miscellaneous">
    <text evidence="1">In the reaction, the free carboxyl group of octanoic acid is attached via an amide linkage to the epsilon-amino group of a specific lysine residue of lipoyl domains of lipoate-dependent enzymes.</text>
</comment>
<comment type="similarity">
    <text evidence="1">Belongs to the LipB family.</text>
</comment>
<keyword id="KW-0012">Acyltransferase</keyword>
<keyword id="KW-0963">Cytoplasm</keyword>
<keyword id="KW-1185">Reference proteome</keyword>
<keyword id="KW-0808">Transferase</keyword>
<reference key="1">
    <citation type="submission" date="2005-09" db="EMBL/GenBank/DDBJ databases">
        <title>Complete sequence of chromosome 1 of Rhodobacter sphaeroides 2.4.1.</title>
        <authorList>
            <person name="Copeland A."/>
            <person name="Lucas S."/>
            <person name="Lapidus A."/>
            <person name="Barry K."/>
            <person name="Detter J.C."/>
            <person name="Glavina T."/>
            <person name="Hammon N."/>
            <person name="Israni S."/>
            <person name="Pitluck S."/>
            <person name="Richardson P."/>
            <person name="Mackenzie C."/>
            <person name="Choudhary M."/>
            <person name="Larimer F."/>
            <person name="Hauser L.J."/>
            <person name="Land M."/>
            <person name="Donohue T.J."/>
            <person name="Kaplan S."/>
        </authorList>
    </citation>
    <scope>NUCLEOTIDE SEQUENCE [LARGE SCALE GENOMIC DNA]</scope>
    <source>
        <strain>ATCC 17023 / DSM 158 / JCM 6121 / CCUG 31486 / LMG 2827 / NBRC 12203 / NCIMB 8253 / ATH 2.4.1.</strain>
    </source>
</reference>